<sequence length="137" mass="14979">MSYNCSSGNFSSCCFGSYLRYPVSTYNLFYPSNAIYSPNTCQLGSSLYNGCQETYCEPTSCQTSCTLARSYQTSCYCPKNSIFCSPRQTNYIRSLGCGNTGLGSLGCGSTGFQSLDCGSSFYHPTTFSSRNFQATCY</sequence>
<feature type="chain" id="PRO_0000223917" description="Keratin-associated protein 15-1">
    <location>
        <begin position="1"/>
        <end position="137"/>
    </location>
</feature>
<feature type="sequence variant" id="VAR_047019" description="In dbSNP:rs2832873." evidence="2 3">
    <original>L</original>
    <variation>M</variation>
    <location>
        <position position="43"/>
    </location>
</feature>
<keyword id="KW-0416">Keratin</keyword>
<keyword id="KW-1185">Reference proteome</keyword>
<gene>
    <name type="primary">KRTAP15-1</name>
    <name type="synonym">KAP15.1</name>
</gene>
<protein>
    <recommendedName>
        <fullName>Keratin-associated protein 15-1</fullName>
    </recommendedName>
</protein>
<organism>
    <name type="scientific">Homo sapiens</name>
    <name type="common">Human</name>
    <dbReference type="NCBI Taxonomy" id="9606"/>
    <lineage>
        <taxon>Eukaryota</taxon>
        <taxon>Metazoa</taxon>
        <taxon>Chordata</taxon>
        <taxon>Craniata</taxon>
        <taxon>Vertebrata</taxon>
        <taxon>Euteleostomi</taxon>
        <taxon>Mammalia</taxon>
        <taxon>Eutheria</taxon>
        <taxon>Euarchontoglires</taxon>
        <taxon>Primates</taxon>
        <taxon>Haplorrhini</taxon>
        <taxon>Catarrhini</taxon>
        <taxon>Hominidae</taxon>
        <taxon>Homo</taxon>
    </lineage>
</organism>
<comment type="function">
    <text>In the hair cortex, hair keratin intermediate filaments are embedded in an interfilamentous matrix, consisting of hair keratin-associated proteins (KRTAP), which are essential for the formation of a rigid and resistant hair shaft through their extensive disulfide bond cross-linking with abundant cysteine residues of hair keratins. The matrix proteins include the high-sulfur and high-glycine-tyrosine keratins.</text>
</comment>
<comment type="subunit">
    <text evidence="1">Interacts with hair keratins.</text>
</comment>
<comment type="interaction">
    <interactant intactId="EBI-11992140">
        <id>Q3LI76</id>
    </interactant>
    <interactant intactId="EBI-3916242">
        <id>Q96HD9</id>
        <label>ACY3</label>
    </interactant>
    <organismsDiffer>false</organismsDiffer>
    <experiments>3</experiments>
</comment>
<comment type="interaction">
    <interactant intactId="EBI-11992140">
        <id>Q3LI76</id>
    </interactant>
    <interactant intactId="EBI-355540">
        <id>Q8IWG5</id>
        <label>ANKHD1</label>
    </interactant>
    <organismsDiffer>false</organismsDiffer>
    <experiments>3</experiments>
</comment>
<comment type="interaction">
    <interactant intactId="EBI-11992140">
        <id>Q3LI76</id>
    </interactant>
    <interactant intactId="EBI-948603">
        <id>Q03989</id>
        <label>ARID5A</label>
    </interactant>
    <organismsDiffer>false</organismsDiffer>
    <experiments>3</experiments>
</comment>
<comment type="interaction">
    <interactant intactId="EBI-11992140">
        <id>Q3LI76</id>
    </interactant>
    <interactant intactId="EBI-12015080">
        <id>Q8WXK3-2</id>
        <label>ASB13</label>
    </interactant>
    <organismsDiffer>false</organismsDiffer>
    <experiments>3</experiments>
</comment>
<comment type="interaction">
    <interactant intactId="EBI-11992140">
        <id>Q3LI76</id>
    </interactant>
    <interactant intactId="EBI-11954292">
        <id>Q86V38</id>
        <label>ATN1</label>
    </interactant>
    <organismsDiffer>false</organismsDiffer>
    <experiments>3</experiments>
</comment>
<comment type="interaction">
    <interactant intactId="EBI-11992140">
        <id>Q3LI76</id>
    </interactant>
    <interactant intactId="EBI-12809220">
        <id>Q5SWW7</id>
        <label>C10orf55</label>
    </interactant>
    <organismsDiffer>false</organismsDiffer>
    <experiments>3</experiments>
</comment>
<comment type="interaction">
    <interactant intactId="EBI-11992140">
        <id>Q3LI76</id>
    </interactant>
    <interactant intactId="EBI-1383687">
        <id>Q9UQM7</id>
        <label>CAMK2A</label>
    </interactant>
    <organismsDiffer>false</organismsDiffer>
    <experiments>3</experiments>
</comment>
<comment type="interaction">
    <interactant intactId="EBI-11992140">
        <id>Q3LI76</id>
    </interactant>
    <interactant intactId="EBI-1104933">
        <id>Q8N4L8</id>
        <label>CCDC24</label>
    </interactant>
    <organismsDiffer>false</organismsDiffer>
    <experiments>3</experiments>
</comment>
<comment type="interaction">
    <interactant intactId="EBI-11992140">
        <id>Q3LI76</id>
    </interactant>
    <interactant intactId="EBI-12261896">
        <id>Q5T4B2</id>
        <label>CERCAM</label>
    </interactant>
    <organismsDiffer>false</organismsDiffer>
    <experiments>3</experiments>
</comment>
<comment type="interaction">
    <interactant intactId="EBI-11992140">
        <id>Q3LI76</id>
    </interactant>
    <interactant intactId="EBI-3867333">
        <id>A8MQ03</id>
        <label>CYSRT1</label>
    </interactant>
    <organismsDiffer>false</organismsDiffer>
    <experiments>3</experiments>
</comment>
<comment type="interaction">
    <interactant intactId="EBI-11992140">
        <id>Q3LI76</id>
    </interactant>
    <interactant intactId="EBI-724310">
        <id>Q15038</id>
        <label>DAZAP2</label>
    </interactant>
    <organismsDiffer>false</organismsDiffer>
    <experiments>5</experiments>
</comment>
<comment type="interaction">
    <interactant intactId="EBI-11992140">
        <id>Q3LI76</id>
    </interactant>
    <interactant intactId="EBI-740376">
        <id>Q86UW9</id>
        <label>DTX2</label>
    </interactant>
    <organismsDiffer>false</organismsDiffer>
    <experiments>3</experiments>
</comment>
<comment type="interaction">
    <interactant intactId="EBI-11992140">
        <id>Q3LI76</id>
    </interactant>
    <interactant intactId="EBI-11977403">
        <id>A0A0C3SFZ9</id>
        <label>FCHO1</label>
    </interactant>
    <organismsDiffer>false</organismsDiffer>
    <experiments>3</experiments>
</comment>
<comment type="interaction">
    <interactant intactId="EBI-11992140">
        <id>Q3LI76</id>
    </interactant>
    <interactant intactId="EBI-17282008">
        <id>O60548</id>
        <label>FOXD2</label>
    </interactant>
    <organismsDiffer>false</organismsDiffer>
    <experiments>3</experiments>
</comment>
<comment type="interaction">
    <interactant intactId="EBI-11992140">
        <id>Q3LI76</id>
    </interactant>
    <interactant intactId="EBI-356700">
        <id>P57678</id>
        <label>GEMIN4</label>
    </interactant>
    <organismsDiffer>false</organismsDiffer>
    <experiments>3</experiments>
</comment>
<comment type="interaction">
    <interactant intactId="EBI-11992140">
        <id>Q3LI76</id>
    </interactant>
    <interactant intactId="EBI-747754">
        <id>P28799</id>
        <label>GRN</label>
    </interactant>
    <organismsDiffer>false</organismsDiffer>
    <experiments>3</experiments>
</comment>
<comment type="interaction">
    <interactant intactId="EBI-11992140">
        <id>Q3LI76</id>
    </interactant>
    <interactant intactId="EBI-740785">
        <id>P49639</id>
        <label>HOXA1</label>
    </interactant>
    <organismsDiffer>false</organismsDiffer>
    <experiments>7</experiments>
</comment>
<comment type="interaction">
    <interactant intactId="EBI-11992140">
        <id>Q3LI76</id>
    </interactant>
    <interactant intactId="EBI-2880706">
        <id>O43593</id>
        <label>HR</label>
    </interactant>
    <organismsDiffer>false</organismsDiffer>
    <experiments>3</experiments>
</comment>
<comment type="interaction">
    <interactant intactId="EBI-11992140">
        <id>Q3LI76</id>
    </interactant>
    <interactant intactId="EBI-6509505">
        <id>Q0VD86</id>
        <label>INCA1</label>
    </interactant>
    <organismsDiffer>false</organismsDiffer>
    <experiments>3</experiments>
</comment>
<comment type="interaction">
    <interactant intactId="EBI-11992140">
        <id>Q3LI76</id>
    </interactant>
    <interactant intactId="EBI-748258">
        <id>Q5TA45</id>
        <label>INTS11</label>
    </interactant>
    <organismsDiffer>false</organismsDiffer>
    <experiments>3</experiments>
</comment>
<comment type="interaction">
    <interactant intactId="EBI-11992140">
        <id>Q3LI76</id>
    </interactant>
    <interactant intactId="EBI-11051601">
        <id>P16144-2</id>
        <label>ITGB4</label>
    </interactant>
    <organismsDiffer>false</organismsDiffer>
    <experiments>3</experiments>
</comment>
<comment type="interaction">
    <interactant intactId="EBI-11992140">
        <id>Q3LI76</id>
    </interactant>
    <interactant intactId="EBI-10981970">
        <id>Q5T749</id>
        <label>KPRP</label>
    </interactant>
    <organismsDiffer>false</organismsDiffer>
    <experiments>3</experiments>
</comment>
<comment type="interaction">
    <interactant intactId="EBI-11992140">
        <id>Q3LI76</id>
    </interactant>
    <interactant intactId="EBI-10171774">
        <id>P60410</id>
        <label>KRTAP10-8</label>
    </interactant>
    <organismsDiffer>false</organismsDiffer>
    <experiments>3</experiments>
</comment>
<comment type="interaction">
    <interactant intactId="EBI-11992140">
        <id>Q3LI76</id>
    </interactant>
    <interactant intactId="EBI-1052037">
        <id>Q8IUC1</id>
        <label>KRTAP11-1</label>
    </interactant>
    <organismsDiffer>false</organismsDiffer>
    <experiments>3</experiments>
</comment>
<comment type="interaction">
    <interactant intactId="EBI-11992140">
        <id>Q3LI76</id>
    </interactant>
    <interactant intactId="EBI-10210845">
        <id>P59990</id>
        <label>KRTAP12-1</label>
    </interactant>
    <organismsDiffer>false</organismsDiffer>
    <experiments>3</experiments>
</comment>
<comment type="interaction">
    <interactant intactId="EBI-11992140">
        <id>Q3LI76</id>
    </interactant>
    <interactant intactId="EBI-10176379">
        <id>P59991</id>
        <label>KRTAP12-2</label>
    </interactant>
    <organismsDiffer>false</organismsDiffer>
    <experiments>3</experiments>
</comment>
<comment type="interaction">
    <interactant intactId="EBI-11992140">
        <id>Q3LI76</id>
    </interactant>
    <interactant intactId="EBI-11953846">
        <id>Q52LG2</id>
        <label>KRTAP13-2</label>
    </interactant>
    <organismsDiffer>false</organismsDiffer>
    <experiments>3</experiments>
</comment>
<comment type="interaction">
    <interactant intactId="EBI-11992140">
        <id>Q3LI76</id>
    </interactant>
    <interactant intactId="EBI-12811111">
        <id>Q8IUB9</id>
        <label>KRTAP19-1</label>
    </interactant>
    <organismsDiffer>false</organismsDiffer>
    <experiments>3</experiments>
</comment>
<comment type="interaction">
    <interactant intactId="EBI-11992140">
        <id>Q3LI76</id>
    </interactant>
    <interactant intactId="EBI-1048945">
        <id>Q3LI72</id>
        <label>KRTAP19-5</label>
    </interactant>
    <organismsDiffer>false</organismsDiffer>
    <experiments>3</experiments>
</comment>
<comment type="interaction">
    <interactant intactId="EBI-11992140">
        <id>Q3LI76</id>
    </interactant>
    <interactant intactId="EBI-9996449">
        <id>Q9BYR8</id>
        <label>KRTAP3-1</label>
    </interactant>
    <organismsDiffer>false</organismsDiffer>
    <experiments>3</experiments>
</comment>
<comment type="interaction">
    <interactant intactId="EBI-11992140">
        <id>Q3LI76</id>
    </interactant>
    <interactant intactId="EBI-751260">
        <id>Q9BYR7</id>
        <label>KRTAP3-2</label>
    </interactant>
    <organismsDiffer>false</organismsDiffer>
    <experiments>5</experiments>
</comment>
<comment type="interaction">
    <interactant intactId="EBI-11992140">
        <id>Q3LI76</id>
    </interactant>
    <interactant intactId="EBI-3957694">
        <id>Q9BYR6</id>
        <label>KRTAP3-3</label>
    </interactant>
    <organismsDiffer>false</organismsDiffer>
    <experiments>3</experiments>
</comment>
<comment type="interaction">
    <interactant intactId="EBI-11992140">
        <id>Q3LI76</id>
    </interactant>
    <interactant intactId="EBI-10302392">
        <id>Q9BYQ6</id>
        <label>KRTAP4-11</label>
    </interactant>
    <organismsDiffer>false</organismsDiffer>
    <experiments>3</experiments>
</comment>
<comment type="interaction">
    <interactant intactId="EBI-11992140">
        <id>Q3LI76</id>
    </interactant>
    <interactant intactId="EBI-11993296">
        <id>Q6L8G4</id>
        <label>KRTAP5-11</label>
    </interactant>
    <organismsDiffer>false</organismsDiffer>
    <experiments>3</experiments>
</comment>
<comment type="interaction">
    <interactant intactId="EBI-11992140">
        <id>Q3LI76</id>
    </interactant>
    <interactant intactId="EBI-11974251">
        <id>Q6L8H2</id>
        <label>KRTAP5-3</label>
    </interactant>
    <organismsDiffer>false</organismsDiffer>
    <experiments>3</experiments>
</comment>
<comment type="interaction">
    <interactant intactId="EBI-11992140">
        <id>Q3LI76</id>
    </interactant>
    <interactant intactId="EBI-11962084">
        <id>Q3LI66</id>
        <label>KRTAP6-2</label>
    </interactant>
    <organismsDiffer>false</organismsDiffer>
    <experiments>3</experiments>
</comment>
<comment type="interaction">
    <interactant intactId="EBI-11992140">
        <id>Q3LI76</id>
    </interactant>
    <interactant intactId="EBI-1044640">
        <id>Q9BYQ4</id>
        <label>KRTAP9-2</label>
    </interactant>
    <organismsDiffer>false</organismsDiffer>
    <experiments>3</experiments>
</comment>
<comment type="interaction">
    <interactant intactId="EBI-11992140">
        <id>Q3LI76</id>
    </interactant>
    <interactant intactId="EBI-10277551">
        <id>Q8WWR8-2</id>
        <label>NEU4</label>
    </interactant>
    <organismsDiffer>false</organismsDiffer>
    <experiments>3</experiments>
</comment>
<comment type="interaction">
    <interactant intactId="EBI-11992140">
        <id>Q3LI76</id>
    </interactant>
    <interactant intactId="EBI-12868744">
        <id>P0CG21</id>
        <label>NHLRC4</label>
    </interactant>
    <organismsDiffer>false</organismsDiffer>
    <experiments>3</experiments>
</comment>
<comment type="interaction">
    <interactant intactId="EBI-11992140">
        <id>Q3LI76</id>
    </interactant>
    <interactant intactId="EBI-12025760">
        <id>Q86UR1-2</id>
        <label>NOXA1</label>
    </interactant>
    <organismsDiffer>false</organismsDiffer>
    <experiments>3</experiments>
</comment>
<comment type="interaction">
    <interactant intactId="EBI-11992140">
        <id>Q3LI76</id>
    </interactant>
    <interactant intactId="EBI-740446">
        <id>P32242</id>
        <label>OTX1</label>
    </interactant>
    <organismsDiffer>false</organismsDiffer>
    <experiments>3</experiments>
</comment>
<comment type="interaction">
    <interactant intactId="EBI-11992140">
        <id>Q3LI76</id>
    </interactant>
    <interactant intactId="EBI-11022007">
        <id>Q9HBE1-4</id>
        <label>PATZ1</label>
    </interactant>
    <organismsDiffer>false</organismsDiffer>
    <experiments>5</experiments>
</comment>
<comment type="interaction">
    <interactant intactId="EBI-11992140">
        <id>Q3LI76</id>
    </interactant>
    <interactant intactId="EBI-724639">
        <id>Q9UBV8</id>
        <label>PEF1</label>
    </interactant>
    <organismsDiffer>false</organismsDiffer>
    <experiments>3</experiments>
</comment>
<comment type="interaction">
    <interactant intactId="EBI-11992140">
        <id>Q3LI76</id>
    </interactant>
    <interactant intactId="EBI-12138495">
        <id>Q99697-2</id>
        <label>PITX2</label>
    </interactant>
    <organismsDiffer>false</organismsDiffer>
    <experiments>3</experiments>
</comment>
<comment type="interaction">
    <interactant intactId="EBI-11992140">
        <id>Q3LI76</id>
    </interactant>
    <interactant intactId="EBI-750734">
        <id>Q9NRY6</id>
        <label>PLSCR3</label>
    </interactant>
    <organismsDiffer>false</organismsDiffer>
    <experiments>3</experiments>
</comment>
<comment type="interaction">
    <interactant intactId="EBI-11992140">
        <id>Q3LI76</id>
    </interactant>
    <interactant intactId="EBI-8673859">
        <id>P28069</id>
        <label>POU1F1</label>
    </interactant>
    <organismsDiffer>false</organismsDiffer>
    <experiments>3</experiments>
</comment>
<comment type="interaction">
    <interactant intactId="EBI-11992140">
        <id>Q3LI76</id>
    </interactant>
    <interactant intactId="EBI-943588">
        <id>Q16633</id>
        <label>POU2AF1</label>
    </interactant>
    <organismsDiffer>false</organismsDiffer>
    <experiments>3</experiments>
</comment>
<comment type="interaction">
    <interactant intactId="EBI-11992140">
        <id>Q3LI76</id>
    </interactant>
    <interactant intactId="EBI-740924">
        <id>Q9NZ81</id>
        <label>PRR13</label>
    </interactant>
    <organismsDiffer>false</organismsDiffer>
    <experiments>3</experiments>
</comment>
<comment type="interaction">
    <interactant intactId="EBI-11992140">
        <id>Q3LI76</id>
    </interactant>
    <interactant intactId="EBI-372273">
        <id>P20618</id>
        <label>PSMB1</label>
    </interactant>
    <organismsDiffer>false</organismsDiffer>
    <experiments>3</experiments>
</comment>
<comment type="interaction">
    <interactant intactId="EBI-11992140">
        <id>Q3LI76</id>
    </interactant>
    <interactant intactId="EBI-740343">
        <id>Q93062-3</id>
        <label>RBPMS</label>
    </interactant>
    <organismsDiffer>false</organismsDiffer>
    <experiments>6</experiments>
</comment>
<comment type="interaction">
    <interactant intactId="EBI-11992140">
        <id>Q3LI76</id>
    </interactant>
    <interactant intactId="EBI-372094">
        <id>Q9BQY4</id>
        <label>RHOXF2</label>
    </interactant>
    <organismsDiffer>false</organismsDiffer>
    <experiments>3</experiments>
</comment>
<comment type="interaction">
    <interactant intactId="EBI-11992140">
        <id>Q3LI76</id>
    </interactant>
    <interactant intactId="EBI-366017">
        <id>Q13671</id>
        <label>RIN1</label>
    </interactant>
    <organismsDiffer>false</organismsDiffer>
    <experiments>3</experiments>
</comment>
<comment type="interaction">
    <interactant intactId="EBI-11992140">
        <id>Q3LI76</id>
    </interactant>
    <interactant intactId="EBI-751555">
        <id>Q9H0X6</id>
        <label>RNF208</label>
    </interactant>
    <organismsDiffer>false</organismsDiffer>
    <experiments>3</experiments>
</comment>
<comment type="interaction">
    <interactant intactId="EBI-11992140">
        <id>Q3LI76</id>
    </interactant>
    <interactant intactId="EBI-12806032">
        <id>Q16348</id>
        <label>SLC15A2</label>
    </interactant>
    <organismsDiffer>false</organismsDiffer>
    <experiments>3</experiments>
</comment>
<comment type="interaction">
    <interactant intactId="EBI-11992140">
        <id>Q3LI76</id>
    </interactant>
    <interactant intactId="EBI-12275818">
        <id>Q53HV7-2</id>
        <label>SMUG1</label>
    </interactant>
    <organismsDiffer>false</organismsDiffer>
    <experiments>3</experiments>
</comment>
<comment type="interaction">
    <interactant intactId="EBI-11992140">
        <id>Q3LI76</id>
    </interactant>
    <interactant intactId="EBI-9087806">
        <id>O95416</id>
        <label>SOX14</label>
    </interactant>
    <organismsDiffer>false</organismsDiffer>
    <experiments>3</experiments>
</comment>
<comment type="interaction">
    <interactant intactId="EBI-11992140">
        <id>Q3LI76</id>
    </interactant>
    <interactant intactId="EBI-11959123">
        <id>Q99932-2</id>
        <label>SPAG8</label>
    </interactant>
    <organismsDiffer>false</organismsDiffer>
    <experiments>3</experiments>
</comment>
<comment type="interaction">
    <interactant intactId="EBI-11992140">
        <id>Q3LI76</id>
    </interactant>
    <interactant intactId="EBI-8644516">
        <id>Q9BXF9</id>
        <label>TEKT3</label>
    </interactant>
    <organismsDiffer>false</organismsDiffer>
    <experiments>3</experiments>
</comment>
<comment type="interaction">
    <interactant intactId="EBI-11992140">
        <id>Q3LI76</id>
    </interactant>
    <interactant intactId="EBI-10239812">
        <id>Q96M29</id>
        <label>TEKT5</label>
    </interactant>
    <organismsDiffer>false</organismsDiffer>
    <experiments>3</experiments>
</comment>
<comment type="interaction">
    <interactant intactId="EBI-11992140">
        <id>Q3LI76</id>
    </interactant>
    <interactant intactId="EBI-11952651">
        <id>Q7Z6R9</id>
        <label>TFAP2D</label>
    </interactant>
    <organismsDiffer>false</organismsDiffer>
    <experiments>3</experiments>
</comment>
<comment type="interaction">
    <interactant intactId="EBI-11992140">
        <id>Q3LI76</id>
    </interactant>
    <interactant intactId="EBI-12014388">
        <id>Q04726-4</id>
        <label>TLE3</label>
    </interactant>
    <organismsDiffer>false</organismsDiffer>
    <experiments>3</experiments>
</comment>
<comment type="interaction">
    <interactant intactId="EBI-11992140">
        <id>Q3LI76</id>
    </interactant>
    <interactant intactId="EBI-74615">
        <id>Q9H0E2</id>
        <label>TOLLIP</label>
    </interactant>
    <organismsDiffer>false</organismsDiffer>
    <experiments>3</experiments>
</comment>
<comment type="interaction">
    <interactant intactId="EBI-11992140">
        <id>Q3LI76</id>
    </interactant>
    <interactant intactId="EBI-2514383">
        <id>Q5T6F2</id>
        <label>UBAP2</label>
    </interactant>
    <organismsDiffer>false</organismsDiffer>
    <experiments>3</experiments>
</comment>
<comment type="interaction">
    <interactant intactId="EBI-11992140">
        <id>Q3LI76</id>
    </interactant>
    <interactant intactId="EBI-12068150">
        <id>Q6NVU6</id>
        <label>UFSP1</label>
    </interactant>
    <organismsDiffer>false</organismsDiffer>
    <experiments>3</experiments>
</comment>
<comment type="interaction">
    <interactant intactId="EBI-11992140">
        <id>Q3LI76</id>
    </interactant>
    <interactant intactId="EBI-2107455">
        <id>Q08AM6</id>
        <label>VAC14</label>
    </interactant>
    <organismsDiffer>false</organismsDiffer>
    <experiments>3</experiments>
</comment>
<comment type="interaction">
    <interactant intactId="EBI-11992140">
        <id>Q3LI76</id>
    </interactant>
    <interactant intactId="EBI-11957216">
        <id>A8MV65-2</id>
        <label>VGLL3</label>
    </interactant>
    <organismsDiffer>false</organismsDiffer>
    <experiments>3</experiments>
</comment>
<comment type="interaction">
    <interactant intactId="EBI-11992140">
        <id>Q3LI76</id>
    </interactant>
    <interactant intactId="EBI-2559305">
        <id>A5D8V6</id>
        <label>VPS37C</label>
    </interactant>
    <organismsDiffer>false</organismsDiffer>
    <experiments>3</experiments>
</comment>
<comment type="interaction">
    <interactant intactId="EBI-11992140">
        <id>Q3LI76</id>
    </interactant>
    <interactant intactId="EBI-2850497">
        <id>Q96DN2</id>
        <label>VWCE</label>
    </interactant>
    <organismsDiffer>false</organismsDiffer>
    <experiments>3</experiments>
</comment>
<comment type="interaction">
    <interactant intactId="EBI-11992140">
        <id>Q3LI76</id>
    </interactant>
    <interactant intactId="EBI-12032042">
        <id>Q64LD2-2</id>
        <label>WDR25</label>
    </interactant>
    <organismsDiffer>false</organismsDiffer>
    <experiments>3</experiments>
</comment>
<comment type="interaction">
    <interactant intactId="EBI-11992140">
        <id>Q3LI76</id>
    </interactant>
    <interactant intactId="EBI-10188476">
        <id>A0A0C4DGF1</id>
        <label>ZBTB32</label>
    </interactant>
    <organismsDiffer>false</organismsDiffer>
    <experiments>3</experiments>
</comment>
<comment type="interaction">
    <interactant intactId="EBI-11992140">
        <id>Q3LI76</id>
    </interactant>
    <interactant intactId="EBI-11963196">
        <id>Q15915</id>
        <label>ZIC1</label>
    </interactant>
    <organismsDiffer>false</organismsDiffer>
    <experiments>3</experiments>
</comment>
<comment type="similarity">
    <text evidence="4">Belongs to the PMG family.</text>
</comment>
<name>KR151_HUMAN</name>
<evidence type="ECO:0000250" key="1"/>
<evidence type="ECO:0000269" key="2">
    <source>
    </source>
</evidence>
<evidence type="ECO:0000269" key="3">
    <source ref="1"/>
</evidence>
<evidence type="ECO:0000305" key="4"/>
<dbReference type="EMBL" id="AB096942">
    <property type="protein sequence ID" value="BAE46357.1"/>
    <property type="molecule type" value="mRNA"/>
</dbReference>
<dbReference type="EMBL" id="BC104927">
    <property type="protein sequence ID" value="AAI04928.1"/>
    <property type="molecule type" value="mRNA"/>
</dbReference>
<dbReference type="EMBL" id="BC104925">
    <property type="protein sequence ID" value="AAI04926.1"/>
    <property type="molecule type" value="mRNA"/>
</dbReference>
<dbReference type="CCDS" id="CCDS13593.1"/>
<dbReference type="RefSeq" id="NP_853654.1">
    <property type="nucleotide sequence ID" value="NM_181623.3"/>
</dbReference>
<dbReference type="BioGRID" id="129062">
    <property type="interactions" value="81"/>
</dbReference>
<dbReference type="FunCoup" id="Q3LI76">
    <property type="interactions" value="28"/>
</dbReference>
<dbReference type="IntAct" id="Q3LI76">
    <property type="interactions" value="79"/>
</dbReference>
<dbReference type="STRING" id="9606.ENSP00000334866"/>
<dbReference type="PhosphoSitePlus" id="Q3LI76"/>
<dbReference type="BioMuta" id="KRTAP15-1"/>
<dbReference type="DMDM" id="209572640"/>
<dbReference type="PaxDb" id="9606-ENSP00000334866"/>
<dbReference type="Antibodypedia" id="6633">
    <property type="antibodies" value="2 antibodies from 2 providers"/>
</dbReference>
<dbReference type="DNASU" id="254950"/>
<dbReference type="Ensembl" id="ENST00000334067.5">
    <property type="protein sequence ID" value="ENSP00000334866.3"/>
    <property type="gene ID" value="ENSG00000186970.5"/>
</dbReference>
<dbReference type="GeneID" id="254950"/>
<dbReference type="KEGG" id="hsa:254950"/>
<dbReference type="MANE-Select" id="ENST00000334067.5">
    <property type="protein sequence ID" value="ENSP00000334866.3"/>
    <property type="RefSeq nucleotide sequence ID" value="NM_181623.3"/>
    <property type="RefSeq protein sequence ID" value="NP_853654.1"/>
</dbReference>
<dbReference type="UCSC" id="uc002yod.4">
    <property type="organism name" value="human"/>
</dbReference>
<dbReference type="AGR" id="HGNC:18927"/>
<dbReference type="CTD" id="254950"/>
<dbReference type="GeneCards" id="KRTAP15-1"/>
<dbReference type="HGNC" id="HGNC:18927">
    <property type="gene designation" value="KRTAP15-1"/>
</dbReference>
<dbReference type="HPA" id="ENSG00000186970">
    <property type="expression patterns" value="Not detected"/>
</dbReference>
<dbReference type="neXtProt" id="NX_Q3LI76"/>
<dbReference type="PharmGKB" id="PA134911178"/>
<dbReference type="VEuPathDB" id="HostDB:ENSG00000186970"/>
<dbReference type="eggNOG" id="ENOG502TD2Y">
    <property type="taxonomic scope" value="Eukaryota"/>
</dbReference>
<dbReference type="GeneTree" id="ENSGT00940000162109"/>
<dbReference type="HOGENOM" id="CLU_111618_0_0_1"/>
<dbReference type="InParanoid" id="Q3LI76"/>
<dbReference type="OMA" id="TCDSFYP"/>
<dbReference type="OrthoDB" id="9834780at2759"/>
<dbReference type="PAN-GO" id="Q3LI76">
    <property type="GO annotations" value="0 GO annotations based on evolutionary models"/>
</dbReference>
<dbReference type="PhylomeDB" id="Q3LI76"/>
<dbReference type="TreeFam" id="TF337331"/>
<dbReference type="PathwayCommons" id="Q3LI76"/>
<dbReference type="Reactome" id="R-HSA-6805567">
    <property type="pathway name" value="Keratinization"/>
</dbReference>
<dbReference type="SignaLink" id="Q3LI76"/>
<dbReference type="BioGRID-ORCS" id="254950">
    <property type="hits" value="19 hits in 1131 CRISPR screens"/>
</dbReference>
<dbReference type="GenomeRNAi" id="254950"/>
<dbReference type="Pharos" id="Q3LI76">
    <property type="development level" value="Tdark"/>
</dbReference>
<dbReference type="PRO" id="PR:Q3LI76"/>
<dbReference type="Proteomes" id="UP000005640">
    <property type="component" value="Chromosome 21"/>
</dbReference>
<dbReference type="RNAct" id="Q3LI76">
    <property type="molecule type" value="protein"/>
</dbReference>
<dbReference type="Bgee" id="ENSG00000186970">
    <property type="expression patterns" value="Expressed in olfactory segment of nasal mucosa"/>
</dbReference>
<dbReference type="GO" id="GO:0005829">
    <property type="term" value="C:cytosol"/>
    <property type="evidence" value="ECO:0000304"/>
    <property type="project" value="Reactome"/>
</dbReference>
<dbReference type="GO" id="GO:0005882">
    <property type="term" value="C:intermediate filament"/>
    <property type="evidence" value="ECO:0007669"/>
    <property type="project" value="UniProtKB-KW"/>
</dbReference>
<dbReference type="InterPro" id="IPR007951">
    <property type="entry name" value="KRTAP_PMG"/>
</dbReference>
<dbReference type="Pfam" id="PF05287">
    <property type="entry name" value="PMG"/>
    <property type="match status" value="1"/>
</dbReference>
<reference key="1">
    <citation type="submission" date="2002-11" db="EMBL/GenBank/DDBJ databases">
        <title>Identification of complete keratin-associated protein (KAP) gene cluster spanning 800 kb region on human chromosome 21q22.11.</title>
        <authorList>
            <person name="Obayashi I."/>
            <person name="Shibuya K."/>
            <person name="Minoshima S."/>
            <person name="Kudoh J."/>
            <person name="Shimizu N."/>
        </authorList>
    </citation>
    <scope>NUCLEOTIDE SEQUENCE [MRNA]</scope>
    <scope>VARIANT MET-43</scope>
    <source>
        <tissue>Hair root</tissue>
    </source>
</reference>
<reference key="2">
    <citation type="journal article" date="2004" name="Genome Res.">
        <title>The status, quality, and expansion of the NIH full-length cDNA project: the Mammalian Gene Collection (MGC).</title>
        <authorList>
            <consortium name="The MGC Project Team"/>
        </authorList>
    </citation>
    <scope>NUCLEOTIDE SEQUENCE [LARGE SCALE MRNA]</scope>
    <scope>VARIANT MET-43</scope>
</reference>
<accession>Q3LI76</accession>
<accession>Q2M3F4</accession>
<proteinExistence type="evidence at protein level"/>